<sequence length="198" mass="21400">MLPSATSLLRGPCLGLRAAALRLVRQQVPHVCAVRLMRCSSHRRGEALTGAPLDNAPKEYPPKIQQLVQDIASLTLLEISDLNELLKKTLKIQDVGLMPMGGMVPGAAPAPTAPEAAEEDVPKQKERTHFTVRLTEAKPVDKVKLIKEIKNYVQGINLVQAKKLVESLPQEIKANVAKAEAEKIKAALEAVGGTVVLE</sequence>
<gene>
    <name type="primary">MRPL12</name>
</gene>
<comment type="function">
    <text evidence="1">As a component of the mitochondrial large ribosomal subunit, plays a role in mitochondrial translation. When present in mitochondria as a free protein not associated with the ribosome, associates with mitochondrial RNA polymerase POLRMT to activate transcription. Required for POLRMT stability.</text>
</comment>
<comment type="subunit">
    <text evidence="1">Component of the mitochondrial ribosome large subunit (39S) which comprises a 16S rRNA and about 50 distinct proteins (By similarity). Interacts with NOA1.</text>
</comment>
<comment type="subcellular location">
    <subcellularLocation>
        <location evidence="1 5">Mitochondrion matrix</location>
    </subcellularLocation>
</comment>
<comment type="PTM">
    <text evidence="1">Two mature forms are produced by differential two-step proteolytic cleavage. Cleaved by the mitochondrial processing protease to produce the long mature form and subsequently by the mitochondrial intermediate protease to produce the short mature form.</text>
</comment>
<comment type="PTM">
    <text evidence="1">In the presence of CUL3, undergoes 'Lys-63'-linked ubiquitination at Lys-150 which results in proteasomal degradation.</text>
</comment>
<comment type="similarity">
    <text evidence="6">Belongs to the bacterial ribosomal protein bL12 family.</text>
</comment>
<name>RM12_BOVIN</name>
<accession>Q7YR75</accession>
<accession>A5D9H8</accession>
<reference key="1">
    <citation type="journal article" date="2004" name="J. Mol. Biol.">
        <title>Functional compatibility of elongation factors between mammalian mitochondrial and bacterial ribosomes: characterization of GTPase activity and translation elongation by hybrid ribosomes bearing heterologous L7/12 proteins.</title>
        <authorList>
            <person name="Terasaki M."/>
            <person name="Suzuki T."/>
            <person name="Hanada T."/>
            <person name="Watanabe K."/>
        </authorList>
    </citation>
    <scope>NUCLEOTIDE SEQUENCE [MRNA]</scope>
</reference>
<reference key="2">
    <citation type="journal article" date="2005" name="BMC Genomics">
        <title>Characterization of 954 bovine full-CDS cDNA sequences.</title>
        <authorList>
            <person name="Harhay G.P."/>
            <person name="Sonstegard T.S."/>
            <person name="Keele J.W."/>
            <person name="Heaton M.P."/>
            <person name="Clawson M.L."/>
            <person name="Snelling W.M."/>
            <person name="Wiedmann R.T."/>
            <person name="Van Tassell C.P."/>
            <person name="Smith T.P.L."/>
        </authorList>
    </citation>
    <scope>NUCLEOTIDE SEQUENCE [LARGE SCALE MRNA]</scope>
</reference>
<reference key="3">
    <citation type="submission" date="2007-09" db="EMBL/GenBank/DDBJ databases">
        <authorList>
            <consortium name="NIH - Mammalian Gene Collection (MGC) project"/>
        </authorList>
    </citation>
    <scope>NUCLEOTIDE SEQUENCE [LARGE SCALE MRNA]</scope>
    <source>
        <strain>Hereford</strain>
        <tissue>Thymus</tissue>
    </source>
</reference>
<reference key="4">
    <citation type="journal article" date="1999" name="Biochemistry">
        <title>Identification of mammalian mitochondrial ribosomal proteins (MRPs) by N-terminal sequencing of purified bovine MRPs and comparison to data bank sequences: the large subribosomal particle.</title>
        <authorList>
            <person name="Graack H.R."/>
            <person name="Bryant M.L."/>
            <person name="O'Brien T.W."/>
        </authorList>
    </citation>
    <scope>PROTEIN SEQUENCE OF 45-69</scope>
    <scope>SUBCELLULAR LOCATION</scope>
</reference>
<reference key="5">
    <citation type="journal article" date="2006" name="J. Mol. Biol.">
        <title>A structural model for the large subunit of the mammalian mitochondrial ribosome.</title>
        <authorList>
            <person name="Mears J.A."/>
            <person name="Sharma M.R."/>
            <person name="Gutell R.R."/>
            <person name="McCook A.S."/>
            <person name="Richardson P.E."/>
            <person name="Caulfield T.R."/>
            <person name="Agrawal R.K."/>
            <person name="Harvey S.C."/>
        </authorList>
    </citation>
    <scope>STRUCTURE BY ELECTRON MICROSCOPY (12.1 ANGSTROMS) OF 62-198</scope>
</reference>
<keyword id="KW-0002">3D-structure</keyword>
<keyword id="KW-0007">Acetylation</keyword>
<keyword id="KW-0903">Direct protein sequencing</keyword>
<keyword id="KW-1017">Isopeptide bond</keyword>
<keyword id="KW-0496">Mitochondrion</keyword>
<keyword id="KW-1185">Reference proteome</keyword>
<keyword id="KW-0687">Ribonucleoprotein</keyword>
<keyword id="KW-0689">Ribosomal protein</keyword>
<keyword id="KW-0809">Transit peptide</keyword>
<keyword id="KW-0832">Ubl conjugation</keyword>
<protein>
    <recommendedName>
        <fullName evidence="6">Large ribosomal subunit protein bL12m</fullName>
    </recommendedName>
    <alternativeName>
        <fullName>39S ribosomal protein L12, mitochondrial</fullName>
        <shortName>L12mt</shortName>
        <shortName>MRP-L12</shortName>
    </alternativeName>
    <component>
        <recommendedName>
            <fullName evidence="1">Large ribosomal subunit protein bL12m, long mature form</fullName>
        </recommendedName>
    </component>
    <component>
        <recommendedName>
            <fullName evidence="1">Large ribosomal subunit protein bL12m, short mature form</fullName>
        </recommendedName>
    </component>
</protein>
<proteinExistence type="evidence at protein level"/>
<dbReference type="EMBL" id="AB116379">
    <property type="protein sequence ID" value="BAC81567.1"/>
    <property type="molecule type" value="mRNA"/>
</dbReference>
<dbReference type="EMBL" id="BT020735">
    <property type="protein sequence ID" value="AAX08752.1"/>
    <property type="molecule type" value="mRNA"/>
</dbReference>
<dbReference type="EMBL" id="BT020755">
    <property type="protein sequence ID" value="AAX08772.1"/>
    <property type="molecule type" value="mRNA"/>
</dbReference>
<dbReference type="EMBL" id="BT020982">
    <property type="protein sequence ID" value="AAX08999.1"/>
    <property type="molecule type" value="mRNA"/>
</dbReference>
<dbReference type="EMBL" id="BT030597">
    <property type="protein sequence ID" value="ABQ13037.1"/>
    <property type="molecule type" value="mRNA"/>
</dbReference>
<dbReference type="EMBL" id="BC134767">
    <property type="protein sequence ID" value="AAI34768.1"/>
    <property type="molecule type" value="mRNA"/>
</dbReference>
<dbReference type="RefSeq" id="NP_963900.1">
    <property type="nucleotide sequence ID" value="NM_201606.2"/>
</dbReference>
<dbReference type="PDB" id="2FTC">
    <property type="method" value="EM"/>
    <property type="resolution" value="12.10 A"/>
    <property type="chains" value="E/F=62-198"/>
</dbReference>
<dbReference type="PDBsum" id="2FTC"/>
<dbReference type="SMR" id="Q7YR75"/>
<dbReference type="FunCoup" id="Q7YR75">
    <property type="interactions" value="1654"/>
</dbReference>
<dbReference type="STRING" id="9913.ENSBTAP00000048266"/>
<dbReference type="PaxDb" id="9913-ENSBTAP00000000534"/>
<dbReference type="Ensembl" id="ENSBTAT00000053193.2">
    <property type="protein sequence ID" value="ENSBTAP00000048266.2"/>
    <property type="gene ID" value="ENSBTAG00000000417.6"/>
</dbReference>
<dbReference type="GeneID" id="399560"/>
<dbReference type="KEGG" id="bta:399560"/>
<dbReference type="CTD" id="6182"/>
<dbReference type="VEuPathDB" id="HostDB:ENSBTAG00000000417"/>
<dbReference type="VGNC" id="VGNC:106827">
    <property type="gene designation" value="MRPL12"/>
</dbReference>
<dbReference type="eggNOG" id="KOG0759">
    <property type="taxonomic scope" value="Eukaryota"/>
</dbReference>
<dbReference type="eggNOG" id="KOG1715">
    <property type="taxonomic scope" value="Eukaryota"/>
</dbReference>
<dbReference type="GeneTree" id="ENSGT00390000000190"/>
<dbReference type="InParanoid" id="Q7YR75"/>
<dbReference type="OMA" id="LEDKWGV"/>
<dbReference type="OrthoDB" id="250175at2759"/>
<dbReference type="Reactome" id="R-BTA-5389840">
    <property type="pathway name" value="Mitochondrial translation elongation"/>
</dbReference>
<dbReference type="Reactome" id="R-BTA-5419276">
    <property type="pathway name" value="Mitochondrial translation termination"/>
</dbReference>
<dbReference type="Reactome" id="R-BTA-9837999">
    <property type="pathway name" value="Mitochondrial protein degradation"/>
</dbReference>
<dbReference type="EvolutionaryTrace" id="Q7YR75"/>
<dbReference type="Proteomes" id="UP000009136">
    <property type="component" value="Chromosome 19"/>
</dbReference>
<dbReference type="Bgee" id="ENSBTAG00000000417">
    <property type="expression patterns" value="Expressed in digestive system secreted substance and 105 other cell types or tissues"/>
</dbReference>
<dbReference type="GO" id="GO:0005743">
    <property type="term" value="C:mitochondrial inner membrane"/>
    <property type="evidence" value="ECO:0000304"/>
    <property type="project" value="Reactome"/>
</dbReference>
<dbReference type="GO" id="GO:0005762">
    <property type="term" value="C:mitochondrial large ribosomal subunit"/>
    <property type="evidence" value="ECO:0000250"/>
    <property type="project" value="UniProtKB"/>
</dbReference>
<dbReference type="GO" id="GO:0005759">
    <property type="term" value="C:mitochondrial matrix"/>
    <property type="evidence" value="ECO:0000250"/>
    <property type="project" value="UniProtKB"/>
</dbReference>
<dbReference type="GO" id="GO:0003729">
    <property type="term" value="F:mRNA binding"/>
    <property type="evidence" value="ECO:0000318"/>
    <property type="project" value="GO_Central"/>
</dbReference>
<dbReference type="GO" id="GO:0003735">
    <property type="term" value="F:structural constituent of ribosome"/>
    <property type="evidence" value="ECO:0000318"/>
    <property type="project" value="GO_Central"/>
</dbReference>
<dbReference type="GO" id="GO:0006390">
    <property type="term" value="P:mitochondrial transcription"/>
    <property type="evidence" value="ECO:0007669"/>
    <property type="project" value="Ensembl"/>
</dbReference>
<dbReference type="GO" id="GO:0045893">
    <property type="term" value="P:positive regulation of DNA-templated transcription"/>
    <property type="evidence" value="ECO:0007669"/>
    <property type="project" value="Ensembl"/>
</dbReference>
<dbReference type="GO" id="GO:0006412">
    <property type="term" value="P:translation"/>
    <property type="evidence" value="ECO:0000318"/>
    <property type="project" value="GO_Central"/>
</dbReference>
<dbReference type="FunFam" id="1.20.5.710:FF:000006">
    <property type="entry name" value="39S ribosomal protein L12, mitochondrial"/>
    <property type="match status" value="1"/>
</dbReference>
<dbReference type="FunFam" id="3.30.1390.10:FF:000001">
    <property type="entry name" value="50S ribosomal protein L7/L12"/>
    <property type="match status" value="1"/>
</dbReference>
<dbReference type="Gene3D" id="3.30.1390.10">
    <property type="match status" value="1"/>
</dbReference>
<dbReference type="Gene3D" id="1.20.5.710">
    <property type="entry name" value="Single helix bin"/>
    <property type="match status" value="1"/>
</dbReference>
<dbReference type="HAMAP" id="MF_00368">
    <property type="entry name" value="Ribosomal_bL12"/>
    <property type="match status" value="1"/>
</dbReference>
<dbReference type="InterPro" id="IPR000206">
    <property type="entry name" value="Ribosomal_bL12"/>
</dbReference>
<dbReference type="InterPro" id="IPR013823">
    <property type="entry name" value="Ribosomal_bL12_C"/>
</dbReference>
<dbReference type="InterPro" id="IPR014719">
    <property type="entry name" value="Ribosomal_bL12_C/ClpS-like"/>
</dbReference>
<dbReference type="InterPro" id="IPR008932">
    <property type="entry name" value="Ribosomal_bL12_oligo"/>
</dbReference>
<dbReference type="InterPro" id="IPR036235">
    <property type="entry name" value="Ribosomal_bL12_oligo_N_sf"/>
</dbReference>
<dbReference type="PANTHER" id="PTHR45987">
    <property type="entry name" value="39S RIBOSOMAL PROTEIN L12"/>
    <property type="match status" value="1"/>
</dbReference>
<dbReference type="PANTHER" id="PTHR45987:SF4">
    <property type="entry name" value="LARGE RIBOSOMAL SUBUNIT PROTEIN BL12M"/>
    <property type="match status" value="1"/>
</dbReference>
<dbReference type="Pfam" id="PF00542">
    <property type="entry name" value="Ribosomal_L12"/>
    <property type="match status" value="1"/>
</dbReference>
<dbReference type="Pfam" id="PF16320">
    <property type="entry name" value="Ribosomal_L12_N"/>
    <property type="match status" value="1"/>
</dbReference>
<dbReference type="SUPFAM" id="SSF54736">
    <property type="entry name" value="ClpS-like"/>
    <property type="match status" value="1"/>
</dbReference>
<dbReference type="SUPFAM" id="SSF48300">
    <property type="entry name" value="Ribosomal protein L7/12, oligomerisation (N-terminal) domain"/>
    <property type="match status" value="1"/>
</dbReference>
<evidence type="ECO:0000250" key="1">
    <source>
        <dbReference type="UniProtKB" id="P52815"/>
    </source>
</evidence>
<evidence type="ECO:0000250" key="2">
    <source>
        <dbReference type="UniProtKB" id="Q9DB15"/>
    </source>
</evidence>
<evidence type="ECO:0000255" key="3"/>
<evidence type="ECO:0000256" key="4">
    <source>
        <dbReference type="SAM" id="MobiDB-lite"/>
    </source>
</evidence>
<evidence type="ECO:0000269" key="5">
    <source>
    </source>
</evidence>
<evidence type="ECO:0000305" key="6"/>
<organism>
    <name type="scientific">Bos taurus</name>
    <name type="common">Bovine</name>
    <dbReference type="NCBI Taxonomy" id="9913"/>
    <lineage>
        <taxon>Eukaryota</taxon>
        <taxon>Metazoa</taxon>
        <taxon>Chordata</taxon>
        <taxon>Craniata</taxon>
        <taxon>Vertebrata</taxon>
        <taxon>Euteleostomi</taxon>
        <taxon>Mammalia</taxon>
        <taxon>Eutheria</taxon>
        <taxon>Laurasiatheria</taxon>
        <taxon>Artiodactyla</taxon>
        <taxon>Ruminantia</taxon>
        <taxon>Pecora</taxon>
        <taxon>Bovidae</taxon>
        <taxon>Bovinae</taxon>
        <taxon>Bos</taxon>
    </lineage>
</organism>
<feature type="transit peptide" description="Mitochondrion" evidence="3">
    <location>
        <begin position="1"/>
        <end position="36"/>
    </location>
</feature>
<feature type="chain" id="PRO_0000461647" description="Large ribosomal subunit protein bL12m, long mature form" evidence="1">
    <location>
        <begin position="37"/>
        <end position="198"/>
    </location>
</feature>
<feature type="chain" id="PRO_0000239700" description="Large ribosomal subunit protein bL12m, short mature form" evidence="1">
    <location>
        <begin position="45"/>
        <end position="198"/>
    </location>
</feature>
<feature type="region of interest" description="Disordered" evidence="4">
    <location>
        <begin position="106"/>
        <end position="126"/>
    </location>
</feature>
<feature type="compositionally biased region" description="Low complexity" evidence="4">
    <location>
        <begin position="106"/>
        <end position="115"/>
    </location>
</feature>
<feature type="modified residue" description="N6-acetyllysine" evidence="1">
    <location>
        <position position="125"/>
    </location>
</feature>
<feature type="modified residue" description="N6-acetyllysine" evidence="2">
    <location>
        <position position="138"/>
    </location>
</feature>
<feature type="modified residue" description="N6-acetyllysine" evidence="1">
    <location>
        <position position="142"/>
    </location>
</feature>
<feature type="modified residue" description="N6-acetyllysine" evidence="1">
    <location>
        <position position="144"/>
    </location>
</feature>
<feature type="modified residue" description="N6-acetyllysine; alternate" evidence="1">
    <location>
        <position position="150"/>
    </location>
</feature>
<feature type="modified residue" description="N6-succinyllysine; alternate" evidence="2">
    <location>
        <position position="150"/>
    </location>
</feature>
<feature type="modified residue" description="N6-succinyllysine" evidence="2">
    <location>
        <position position="162"/>
    </location>
</feature>
<feature type="modified residue" description="N6-acetyllysine" evidence="1">
    <location>
        <position position="163"/>
    </location>
</feature>
<feature type="modified residue" description="N6-acetyllysine" evidence="1">
    <location>
        <position position="173"/>
    </location>
</feature>
<feature type="modified residue" description="N6-acetyllysine; alternate" evidence="1">
    <location>
        <position position="178"/>
    </location>
</feature>
<feature type="modified residue" description="N6-succinyllysine; alternate" evidence="2">
    <location>
        <position position="178"/>
    </location>
</feature>
<feature type="modified residue" description="N6-acetyllysine" evidence="1">
    <location>
        <position position="185"/>
    </location>
</feature>
<feature type="cross-link" description="Glycyl lysine isopeptide (Lys-Gly) (interchain with G-Cter in ubiquitin)" evidence="1">
    <location>
        <position position="150"/>
    </location>
</feature>